<reference key="1">
    <citation type="journal article" date="2005" name="BMC Genomics">
        <title>Bacterial genome adaptation to niches: divergence of the potential virulence genes in three Burkholderia species of different survival strategies.</title>
        <authorList>
            <person name="Kim H.S."/>
            <person name="Schell M.A."/>
            <person name="Yu Y."/>
            <person name="Ulrich R.L."/>
            <person name="Sarria S.H."/>
            <person name="Nierman W.C."/>
            <person name="DeShazer D."/>
        </authorList>
    </citation>
    <scope>NUCLEOTIDE SEQUENCE [LARGE SCALE GENOMIC DNA]</scope>
    <source>
        <strain>ATCC 700388 / DSM 13276 / CCUG 48851 / CIP 106301 / E264</strain>
    </source>
</reference>
<accession>Q2SXA6</accession>
<feature type="chain" id="PRO_0000335130" description="DNA mismatch repair protein MutS">
    <location>
        <begin position="1"/>
        <end position="893"/>
    </location>
</feature>
<feature type="binding site" evidence="1">
    <location>
        <begin position="637"/>
        <end position="644"/>
    </location>
    <ligand>
        <name>ATP</name>
        <dbReference type="ChEBI" id="CHEBI:30616"/>
    </ligand>
</feature>
<sequence>MDKDVQEITDSKQQLTEAAFSNHTPMMQQYLRIKAEHPETLVFYRMGDFYELFFEDAEKAARLLDLTLTQRGASAGTPIKMAGVPHHAVEQYLAKLVKFGESAAICEQIGDPATSKGPVERKVVRVVTPGTLTDAALLSDKSDVFLLALCVGHNKRGVASTIGLAWLNLASGALRLAEIAPDQLGAALERIRPAEILAADGAIEAVPAGTGAITRVPAWHFDIASGTQRLCDQLEVASLDGFGAQALTSANGAAGALLIYAAATQGQQLRHVRSLKVENESEYIGLDPSTRRNLELTETLRGTESPTLYSLLDTCCTAMGSRLLRHWLHHPPRASVAAQARHQAIGALLDAPVHVGLDSLRSALRQIADVERITGRLALLSARPRDLSSLRDTFAALPALRERVAEIAPNAAALGRLEAALEPPPGCLDLLTRAIAPEPAAMVRDGGVIARGYDAELDELRDISENCGQFLIDLETRERARTGIPNLRVEYNKVHGFYIEVTRGQTDKVPDDYRRRQTLKNAERYITPELKTFEDKALSAQERALARERALYDSVLQALLPHIEGCQRVASGLAELDLLAAFAERARTLDWVAPEFIDEIGIEIDQGRHPVVEAQVEQFIANDCALNSDRKLLLITGPNMGGKSTFMRQTALIALMAYVGSYVPAKAARFGPIDRIFTRIGAADDLAGGRSTFMVEMTEAAAILNDATPQSLVLMDEIGRGTSTFDGLALAWAIARHLLSHNRCYTLFATHYFELTQLPAEFPQAANVHLSAVEHGHGIVFLHAVEEGPANQSYGLQVAQLAGVPAPVIRAARKHLAHLEQQSAAQATPQLDLFAAQPIVDEQECNQPPAAAPHPALERLLALDPDDLKPRDALDLLYELRALARSGATDAQR</sequence>
<dbReference type="EMBL" id="CP000086">
    <property type="protein sequence ID" value="ABC37610.1"/>
    <property type="molecule type" value="Genomic_DNA"/>
</dbReference>
<dbReference type="RefSeq" id="WP_009890225.1">
    <property type="nucleotide sequence ID" value="NZ_CP008785.1"/>
</dbReference>
<dbReference type="SMR" id="Q2SXA6"/>
<dbReference type="GeneID" id="45121644"/>
<dbReference type="KEGG" id="bte:BTH_I1913"/>
<dbReference type="HOGENOM" id="CLU_002472_4_0_4"/>
<dbReference type="Proteomes" id="UP000001930">
    <property type="component" value="Chromosome I"/>
</dbReference>
<dbReference type="GO" id="GO:0005829">
    <property type="term" value="C:cytosol"/>
    <property type="evidence" value="ECO:0007669"/>
    <property type="project" value="TreeGrafter"/>
</dbReference>
<dbReference type="GO" id="GO:0005524">
    <property type="term" value="F:ATP binding"/>
    <property type="evidence" value="ECO:0007669"/>
    <property type="project" value="UniProtKB-UniRule"/>
</dbReference>
<dbReference type="GO" id="GO:0140664">
    <property type="term" value="F:ATP-dependent DNA damage sensor activity"/>
    <property type="evidence" value="ECO:0007669"/>
    <property type="project" value="InterPro"/>
</dbReference>
<dbReference type="GO" id="GO:0003684">
    <property type="term" value="F:damaged DNA binding"/>
    <property type="evidence" value="ECO:0007669"/>
    <property type="project" value="UniProtKB-UniRule"/>
</dbReference>
<dbReference type="GO" id="GO:0030983">
    <property type="term" value="F:mismatched DNA binding"/>
    <property type="evidence" value="ECO:0007669"/>
    <property type="project" value="InterPro"/>
</dbReference>
<dbReference type="GO" id="GO:0006298">
    <property type="term" value="P:mismatch repair"/>
    <property type="evidence" value="ECO:0007669"/>
    <property type="project" value="UniProtKB-UniRule"/>
</dbReference>
<dbReference type="CDD" id="cd03284">
    <property type="entry name" value="ABC_MutS1"/>
    <property type="match status" value="1"/>
</dbReference>
<dbReference type="FunFam" id="3.40.1170.10:FF:000001">
    <property type="entry name" value="DNA mismatch repair protein MutS"/>
    <property type="match status" value="1"/>
</dbReference>
<dbReference type="FunFam" id="3.40.50.300:FF:000870">
    <property type="entry name" value="MutS protein homolog 4"/>
    <property type="match status" value="1"/>
</dbReference>
<dbReference type="Gene3D" id="1.10.1420.10">
    <property type="match status" value="2"/>
</dbReference>
<dbReference type="Gene3D" id="6.10.140.430">
    <property type="match status" value="1"/>
</dbReference>
<dbReference type="Gene3D" id="3.40.1170.10">
    <property type="entry name" value="DNA repair protein MutS, domain I"/>
    <property type="match status" value="1"/>
</dbReference>
<dbReference type="Gene3D" id="3.30.420.110">
    <property type="entry name" value="MutS, connector domain"/>
    <property type="match status" value="1"/>
</dbReference>
<dbReference type="Gene3D" id="3.40.50.300">
    <property type="entry name" value="P-loop containing nucleotide triphosphate hydrolases"/>
    <property type="match status" value="1"/>
</dbReference>
<dbReference type="HAMAP" id="MF_00096">
    <property type="entry name" value="MutS"/>
    <property type="match status" value="1"/>
</dbReference>
<dbReference type="InterPro" id="IPR005748">
    <property type="entry name" value="DNA_mismatch_repair_MutS"/>
</dbReference>
<dbReference type="InterPro" id="IPR007695">
    <property type="entry name" value="DNA_mismatch_repair_MutS-lik_N"/>
</dbReference>
<dbReference type="InterPro" id="IPR017261">
    <property type="entry name" value="DNA_mismatch_repair_MutS/MSH"/>
</dbReference>
<dbReference type="InterPro" id="IPR000432">
    <property type="entry name" value="DNA_mismatch_repair_MutS_C"/>
</dbReference>
<dbReference type="InterPro" id="IPR007861">
    <property type="entry name" value="DNA_mismatch_repair_MutS_clamp"/>
</dbReference>
<dbReference type="InterPro" id="IPR007696">
    <property type="entry name" value="DNA_mismatch_repair_MutS_core"/>
</dbReference>
<dbReference type="InterPro" id="IPR016151">
    <property type="entry name" value="DNA_mismatch_repair_MutS_N"/>
</dbReference>
<dbReference type="InterPro" id="IPR036187">
    <property type="entry name" value="DNA_mismatch_repair_MutS_sf"/>
</dbReference>
<dbReference type="InterPro" id="IPR007860">
    <property type="entry name" value="DNA_mmatch_repair_MutS_con_dom"/>
</dbReference>
<dbReference type="InterPro" id="IPR045076">
    <property type="entry name" value="MutS"/>
</dbReference>
<dbReference type="InterPro" id="IPR036678">
    <property type="entry name" value="MutS_con_dom_sf"/>
</dbReference>
<dbReference type="InterPro" id="IPR027417">
    <property type="entry name" value="P-loop_NTPase"/>
</dbReference>
<dbReference type="NCBIfam" id="TIGR01070">
    <property type="entry name" value="mutS1"/>
    <property type="match status" value="1"/>
</dbReference>
<dbReference type="NCBIfam" id="NF003810">
    <property type="entry name" value="PRK05399.1"/>
    <property type="match status" value="1"/>
</dbReference>
<dbReference type="PANTHER" id="PTHR11361:SF34">
    <property type="entry name" value="DNA MISMATCH REPAIR PROTEIN MSH1, MITOCHONDRIAL"/>
    <property type="match status" value="1"/>
</dbReference>
<dbReference type="PANTHER" id="PTHR11361">
    <property type="entry name" value="DNA MISMATCH REPAIR PROTEIN MUTS FAMILY MEMBER"/>
    <property type="match status" value="1"/>
</dbReference>
<dbReference type="Pfam" id="PF01624">
    <property type="entry name" value="MutS_I"/>
    <property type="match status" value="1"/>
</dbReference>
<dbReference type="Pfam" id="PF05188">
    <property type="entry name" value="MutS_II"/>
    <property type="match status" value="1"/>
</dbReference>
<dbReference type="Pfam" id="PF05192">
    <property type="entry name" value="MutS_III"/>
    <property type="match status" value="1"/>
</dbReference>
<dbReference type="Pfam" id="PF05190">
    <property type="entry name" value="MutS_IV"/>
    <property type="match status" value="1"/>
</dbReference>
<dbReference type="Pfam" id="PF00488">
    <property type="entry name" value="MutS_V"/>
    <property type="match status" value="1"/>
</dbReference>
<dbReference type="PIRSF" id="PIRSF037677">
    <property type="entry name" value="DNA_mis_repair_Msh6"/>
    <property type="match status" value="1"/>
</dbReference>
<dbReference type="SMART" id="SM00534">
    <property type="entry name" value="MUTSac"/>
    <property type="match status" value="1"/>
</dbReference>
<dbReference type="SMART" id="SM00533">
    <property type="entry name" value="MUTSd"/>
    <property type="match status" value="1"/>
</dbReference>
<dbReference type="SUPFAM" id="SSF55271">
    <property type="entry name" value="DNA repair protein MutS, domain I"/>
    <property type="match status" value="1"/>
</dbReference>
<dbReference type="SUPFAM" id="SSF53150">
    <property type="entry name" value="DNA repair protein MutS, domain II"/>
    <property type="match status" value="1"/>
</dbReference>
<dbReference type="SUPFAM" id="SSF48334">
    <property type="entry name" value="DNA repair protein MutS, domain III"/>
    <property type="match status" value="1"/>
</dbReference>
<dbReference type="SUPFAM" id="SSF52540">
    <property type="entry name" value="P-loop containing nucleoside triphosphate hydrolases"/>
    <property type="match status" value="1"/>
</dbReference>
<dbReference type="PROSITE" id="PS00486">
    <property type="entry name" value="DNA_MISMATCH_REPAIR_2"/>
    <property type="match status" value="1"/>
</dbReference>
<evidence type="ECO:0000255" key="1">
    <source>
        <dbReference type="HAMAP-Rule" id="MF_00096"/>
    </source>
</evidence>
<name>MUTS_BURTA</name>
<organism>
    <name type="scientific">Burkholderia thailandensis (strain ATCC 700388 / DSM 13276 / CCUG 48851 / CIP 106301 / E264)</name>
    <dbReference type="NCBI Taxonomy" id="271848"/>
    <lineage>
        <taxon>Bacteria</taxon>
        <taxon>Pseudomonadati</taxon>
        <taxon>Pseudomonadota</taxon>
        <taxon>Betaproteobacteria</taxon>
        <taxon>Burkholderiales</taxon>
        <taxon>Burkholderiaceae</taxon>
        <taxon>Burkholderia</taxon>
        <taxon>pseudomallei group</taxon>
    </lineage>
</organism>
<keyword id="KW-0067">ATP-binding</keyword>
<keyword id="KW-0227">DNA damage</keyword>
<keyword id="KW-0234">DNA repair</keyword>
<keyword id="KW-0238">DNA-binding</keyword>
<keyword id="KW-0547">Nucleotide-binding</keyword>
<protein>
    <recommendedName>
        <fullName evidence="1">DNA mismatch repair protein MutS</fullName>
    </recommendedName>
</protein>
<gene>
    <name evidence="1" type="primary">mutS</name>
    <name type="ordered locus">BTH_I1913</name>
</gene>
<proteinExistence type="inferred from homology"/>
<comment type="function">
    <text evidence="1">This protein is involved in the repair of mismatches in DNA. It is possible that it carries out the mismatch recognition step. This protein has a weak ATPase activity.</text>
</comment>
<comment type="similarity">
    <text evidence="1">Belongs to the DNA mismatch repair MutS family.</text>
</comment>